<keyword id="KW-0031">Aminopeptidase</keyword>
<keyword id="KW-0963">Cytoplasm</keyword>
<keyword id="KW-0378">Hydrolase</keyword>
<keyword id="KW-0464">Manganese</keyword>
<keyword id="KW-0479">Metal-binding</keyword>
<keyword id="KW-0645">Protease</keyword>
<name>AMPA_BURCJ</name>
<dbReference type="EC" id="3.4.11.1" evidence="1"/>
<dbReference type="EC" id="3.4.11.10" evidence="1"/>
<dbReference type="EMBL" id="AM747720">
    <property type="protein sequence ID" value="CAR52977.1"/>
    <property type="molecule type" value="Genomic_DNA"/>
</dbReference>
<dbReference type="RefSeq" id="WP_006484797.1">
    <property type="nucleotide sequence ID" value="NC_011000.1"/>
</dbReference>
<dbReference type="SMR" id="B4E8G9"/>
<dbReference type="MEROPS" id="M17.003"/>
<dbReference type="KEGG" id="bcj:BCAL2676"/>
<dbReference type="eggNOG" id="COG0260">
    <property type="taxonomic scope" value="Bacteria"/>
</dbReference>
<dbReference type="HOGENOM" id="CLU_013734_2_2_4"/>
<dbReference type="BioCyc" id="BCEN216591:G1G1V-2964-MONOMER"/>
<dbReference type="Proteomes" id="UP000001035">
    <property type="component" value="Chromosome 1"/>
</dbReference>
<dbReference type="GO" id="GO:0005737">
    <property type="term" value="C:cytoplasm"/>
    <property type="evidence" value="ECO:0007669"/>
    <property type="project" value="UniProtKB-SubCell"/>
</dbReference>
<dbReference type="GO" id="GO:0030145">
    <property type="term" value="F:manganese ion binding"/>
    <property type="evidence" value="ECO:0007669"/>
    <property type="project" value="UniProtKB-UniRule"/>
</dbReference>
<dbReference type="GO" id="GO:0070006">
    <property type="term" value="F:metalloaminopeptidase activity"/>
    <property type="evidence" value="ECO:0007669"/>
    <property type="project" value="InterPro"/>
</dbReference>
<dbReference type="GO" id="GO:0006508">
    <property type="term" value="P:proteolysis"/>
    <property type="evidence" value="ECO:0007669"/>
    <property type="project" value="UniProtKB-KW"/>
</dbReference>
<dbReference type="CDD" id="cd00433">
    <property type="entry name" value="Peptidase_M17"/>
    <property type="match status" value="1"/>
</dbReference>
<dbReference type="FunFam" id="3.40.630.10:FF:000004">
    <property type="entry name" value="Probable cytosol aminopeptidase"/>
    <property type="match status" value="1"/>
</dbReference>
<dbReference type="Gene3D" id="3.40.220.10">
    <property type="entry name" value="Leucine Aminopeptidase, subunit E, domain 1"/>
    <property type="match status" value="1"/>
</dbReference>
<dbReference type="Gene3D" id="3.40.630.10">
    <property type="entry name" value="Zn peptidases"/>
    <property type="match status" value="1"/>
</dbReference>
<dbReference type="HAMAP" id="MF_00181">
    <property type="entry name" value="Cytosol_peptidase_M17"/>
    <property type="match status" value="1"/>
</dbReference>
<dbReference type="InterPro" id="IPR011356">
    <property type="entry name" value="Leucine_aapep/pepB"/>
</dbReference>
<dbReference type="InterPro" id="IPR043472">
    <property type="entry name" value="Macro_dom-like"/>
</dbReference>
<dbReference type="InterPro" id="IPR000819">
    <property type="entry name" value="Peptidase_M17_C"/>
</dbReference>
<dbReference type="InterPro" id="IPR023042">
    <property type="entry name" value="Peptidase_M17_leu_NH2_pept"/>
</dbReference>
<dbReference type="InterPro" id="IPR008283">
    <property type="entry name" value="Peptidase_M17_N"/>
</dbReference>
<dbReference type="NCBIfam" id="NF002073">
    <property type="entry name" value="PRK00913.1-2"/>
    <property type="match status" value="1"/>
</dbReference>
<dbReference type="NCBIfam" id="NF002074">
    <property type="entry name" value="PRK00913.1-4"/>
    <property type="match status" value="1"/>
</dbReference>
<dbReference type="NCBIfam" id="NF002077">
    <property type="entry name" value="PRK00913.2-4"/>
    <property type="match status" value="1"/>
</dbReference>
<dbReference type="NCBIfam" id="NF002083">
    <property type="entry name" value="PRK00913.3-5"/>
    <property type="match status" value="1"/>
</dbReference>
<dbReference type="PANTHER" id="PTHR11963:SF23">
    <property type="entry name" value="CYTOSOL AMINOPEPTIDASE"/>
    <property type="match status" value="1"/>
</dbReference>
<dbReference type="PANTHER" id="PTHR11963">
    <property type="entry name" value="LEUCINE AMINOPEPTIDASE-RELATED"/>
    <property type="match status" value="1"/>
</dbReference>
<dbReference type="Pfam" id="PF00883">
    <property type="entry name" value="Peptidase_M17"/>
    <property type="match status" value="1"/>
</dbReference>
<dbReference type="Pfam" id="PF02789">
    <property type="entry name" value="Peptidase_M17_N"/>
    <property type="match status" value="1"/>
</dbReference>
<dbReference type="PRINTS" id="PR00481">
    <property type="entry name" value="LAMNOPPTDASE"/>
</dbReference>
<dbReference type="SUPFAM" id="SSF52949">
    <property type="entry name" value="Macro domain-like"/>
    <property type="match status" value="1"/>
</dbReference>
<dbReference type="SUPFAM" id="SSF53187">
    <property type="entry name" value="Zn-dependent exopeptidases"/>
    <property type="match status" value="1"/>
</dbReference>
<dbReference type="PROSITE" id="PS00631">
    <property type="entry name" value="CYTOSOL_AP"/>
    <property type="match status" value="1"/>
</dbReference>
<feature type="chain" id="PRO_1000098308" description="Probable cytosol aminopeptidase">
    <location>
        <begin position="1"/>
        <end position="503"/>
    </location>
</feature>
<feature type="active site" evidence="1">
    <location>
        <position position="286"/>
    </location>
</feature>
<feature type="active site" evidence="1">
    <location>
        <position position="360"/>
    </location>
</feature>
<feature type="binding site" evidence="1">
    <location>
        <position position="274"/>
    </location>
    <ligand>
        <name>Mn(2+)</name>
        <dbReference type="ChEBI" id="CHEBI:29035"/>
        <label>2</label>
    </ligand>
</feature>
<feature type="binding site" evidence="1">
    <location>
        <position position="279"/>
    </location>
    <ligand>
        <name>Mn(2+)</name>
        <dbReference type="ChEBI" id="CHEBI:29035"/>
        <label>1</label>
    </ligand>
</feature>
<feature type="binding site" evidence="1">
    <location>
        <position position="279"/>
    </location>
    <ligand>
        <name>Mn(2+)</name>
        <dbReference type="ChEBI" id="CHEBI:29035"/>
        <label>2</label>
    </ligand>
</feature>
<feature type="binding site" evidence="1">
    <location>
        <position position="297"/>
    </location>
    <ligand>
        <name>Mn(2+)</name>
        <dbReference type="ChEBI" id="CHEBI:29035"/>
        <label>2</label>
    </ligand>
</feature>
<feature type="binding site" evidence="1">
    <location>
        <position position="356"/>
    </location>
    <ligand>
        <name>Mn(2+)</name>
        <dbReference type="ChEBI" id="CHEBI:29035"/>
        <label>1</label>
    </ligand>
</feature>
<feature type="binding site" evidence="1">
    <location>
        <position position="358"/>
    </location>
    <ligand>
        <name>Mn(2+)</name>
        <dbReference type="ChEBI" id="CHEBI:29035"/>
        <label>1</label>
    </ligand>
</feature>
<feature type="binding site" evidence="1">
    <location>
        <position position="358"/>
    </location>
    <ligand>
        <name>Mn(2+)</name>
        <dbReference type="ChEBI" id="CHEBI:29035"/>
        <label>2</label>
    </ligand>
</feature>
<organism>
    <name type="scientific">Burkholderia cenocepacia (strain ATCC BAA-245 / DSM 16553 / LMG 16656 / NCTC 13227 / J2315 / CF5610)</name>
    <name type="common">Burkholderia cepacia (strain J2315)</name>
    <dbReference type="NCBI Taxonomy" id="216591"/>
    <lineage>
        <taxon>Bacteria</taxon>
        <taxon>Pseudomonadati</taxon>
        <taxon>Pseudomonadota</taxon>
        <taxon>Betaproteobacteria</taxon>
        <taxon>Burkholderiales</taxon>
        <taxon>Burkholderiaceae</taxon>
        <taxon>Burkholderia</taxon>
        <taxon>Burkholderia cepacia complex</taxon>
    </lineage>
</organism>
<protein>
    <recommendedName>
        <fullName evidence="1">Probable cytosol aminopeptidase</fullName>
        <ecNumber evidence="1">3.4.11.1</ecNumber>
    </recommendedName>
    <alternativeName>
        <fullName evidence="1">Leucine aminopeptidase</fullName>
        <shortName evidence="1">LAP</shortName>
        <ecNumber evidence="1">3.4.11.10</ecNumber>
    </alternativeName>
    <alternativeName>
        <fullName evidence="1">Leucyl aminopeptidase</fullName>
    </alternativeName>
</protein>
<accession>B4E8G9</accession>
<sequence>MDFSIKGCDWSKGEAKGFLTGKSDCIVLGIFEAQTLSGAALDIDTATKGLISRVVKAGDMDGKRGKTLFLHEVSGIGASRVLLVGLGKQDAFNQKAYNDAVTAAWRALLATKVVQVTFSLAQLPVDERSSDWGVRAAILALRNETYRFTQMKSKPEPASHTLKRVVFSVDPADEKAAKVAVKQAVALANGMDLTRDLGNLPGNVCTPTYLGNTAKKIAKDWGLKAEVLGLKQIQALKMGSFLSVARASVEPPQFIVLHYQGAAAKAAPVVLVGKGITFDTGGISLKPGEGMDEMKYDMCGAGSVLGTIRAVAEMGLKINVVAIVPTCENMPGGNATKPGDIVTSMKGLTIEVLNTDAEGRLILCDALTYAERFKPAAVIDVATLTGACVIALGGHNSGLFSTNDALAGELLDASREANDPAWRMPLDDEYQDQLKSNFADLANIGGRPAGAVTAACFLSRFTESYPWAHLDIAGTAWKGGAAKGATGRPVPLLAQFLIDRAGQ</sequence>
<comment type="function">
    <text evidence="1">Presumably involved in the processing and regular turnover of intracellular proteins. Catalyzes the removal of unsubstituted N-terminal amino acids from various peptides.</text>
</comment>
<comment type="catalytic activity">
    <reaction evidence="1">
        <text>Release of an N-terminal amino acid, Xaa-|-Yaa-, in which Xaa is preferably Leu, but may be other amino acids including Pro although not Arg or Lys, and Yaa may be Pro. Amino acid amides and methyl esters are also readily hydrolyzed, but rates on arylamides are exceedingly low.</text>
        <dbReference type="EC" id="3.4.11.1"/>
    </reaction>
</comment>
<comment type="catalytic activity">
    <reaction evidence="1">
        <text>Release of an N-terminal amino acid, preferentially leucine, but not glutamic or aspartic acids.</text>
        <dbReference type="EC" id="3.4.11.10"/>
    </reaction>
</comment>
<comment type="cofactor">
    <cofactor evidence="1">
        <name>Mn(2+)</name>
        <dbReference type="ChEBI" id="CHEBI:29035"/>
    </cofactor>
    <text evidence="1">Binds 2 manganese ions per subunit.</text>
</comment>
<comment type="subcellular location">
    <subcellularLocation>
        <location evidence="1">Cytoplasm</location>
    </subcellularLocation>
</comment>
<comment type="similarity">
    <text evidence="1">Belongs to the peptidase M17 family.</text>
</comment>
<reference key="1">
    <citation type="journal article" date="2009" name="J. Bacteriol.">
        <title>The genome of Burkholderia cenocepacia J2315, an epidemic pathogen of cystic fibrosis patients.</title>
        <authorList>
            <person name="Holden M.T."/>
            <person name="Seth-Smith H.M."/>
            <person name="Crossman L.C."/>
            <person name="Sebaihia M."/>
            <person name="Bentley S.D."/>
            <person name="Cerdeno-Tarraga A.M."/>
            <person name="Thomson N.R."/>
            <person name="Bason N."/>
            <person name="Quail M.A."/>
            <person name="Sharp S."/>
            <person name="Cherevach I."/>
            <person name="Churcher C."/>
            <person name="Goodhead I."/>
            <person name="Hauser H."/>
            <person name="Holroyd N."/>
            <person name="Mungall K."/>
            <person name="Scott P."/>
            <person name="Walker D."/>
            <person name="White B."/>
            <person name="Rose H."/>
            <person name="Iversen P."/>
            <person name="Mil-Homens D."/>
            <person name="Rocha E.P."/>
            <person name="Fialho A.M."/>
            <person name="Baldwin A."/>
            <person name="Dowson C."/>
            <person name="Barrell B.G."/>
            <person name="Govan J.R."/>
            <person name="Vandamme P."/>
            <person name="Hart C.A."/>
            <person name="Mahenthiralingam E."/>
            <person name="Parkhill J."/>
        </authorList>
    </citation>
    <scope>NUCLEOTIDE SEQUENCE [LARGE SCALE GENOMIC DNA]</scope>
    <source>
        <strain>ATCC BAA-245 / DSM 16553 / LMG 16656 / NCTC 13227 / J2315 / CF5610</strain>
    </source>
</reference>
<evidence type="ECO:0000255" key="1">
    <source>
        <dbReference type="HAMAP-Rule" id="MF_00181"/>
    </source>
</evidence>
<gene>
    <name evidence="1" type="primary">pepA</name>
    <name type="ordered locus">BceJ2315_26150</name>
    <name type="ORF">BCAL2676</name>
</gene>
<proteinExistence type="inferred from homology"/>